<sequence length="128" mass="14459">MRDWRFFEDGNLSCSRFELVILASQRAYDLQSGSLPDVQHEESDKSPVIALKELYSLSMDYEKLFHAAIRRIVHFSGSGYAGISSDSGAARPHARGLVEHIDHDLVEERDSEVFSDSEFSFAEDEGDE</sequence>
<comment type="function">
    <text evidence="1">Promotes RNA polymerase assembly. Latches the N- and C-terminal regions of the beta' subunit thereby facilitating its interaction with the beta and alpha subunits.</text>
</comment>
<comment type="catalytic activity">
    <reaction evidence="1">
        <text>RNA(n) + a ribonucleoside 5'-triphosphate = RNA(n+1) + diphosphate</text>
        <dbReference type="Rhea" id="RHEA:21248"/>
        <dbReference type="Rhea" id="RHEA-COMP:14527"/>
        <dbReference type="Rhea" id="RHEA-COMP:17342"/>
        <dbReference type="ChEBI" id="CHEBI:33019"/>
        <dbReference type="ChEBI" id="CHEBI:61557"/>
        <dbReference type="ChEBI" id="CHEBI:140395"/>
        <dbReference type="EC" id="2.7.7.6"/>
    </reaction>
</comment>
<comment type="subunit">
    <text evidence="1">The RNAP catalytic core consists of 2 alpha, 1 beta, 1 beta' and 1 omega subunit. When a sigma factor is associated with the core the holoenzyme is formed, which can initiate transcription.</text>
</comment>
<comment type="similarity">
    <text evidence="1">Belongs to the RNA polymerase subunit omega family.</text>
</comment>
<gene>
    <name evidence="1" type="primary">rpoZ</name>
    <name type="ordered locus">NSE_0039</name>
</gene>
<organism>
    <name type="scientific">Neorickettsia sennetsu (strain ATCC VR-367 / Miyayama)</name>
    <name type="common">Ehrlichia sennetsu</name>
    <dbReference type="NCBI Taxonomy" id="222891"/>
    <lineage>
        <taxon>Bacteria</taxon>
        <taxon>Pseudomonadati</taxon>
        <taxon>Pseudomonadota</taxon>
        <taxon>Alphaproteobacteria</taxon>
        <taxon>Rickettsiales</taxon>
        <taxon>Anaplasmataceae</taxon>
        <taxon>Neorickettsia</taxon>
    </lineage>
</organism>
<dbReference type="EC" id="2.7.7.6" evidence="1"/>
<dbReference type="EMBL" id="CP000237">
    <property type="protein sequence ID" value="ABD45843.1"/>
    <property type="molecule type" value="Genomic_DNA"/>
</dbReference>
<dbReference type="RefSeq" id="WP_011451447.1">
    <property type="nucleotide sequence ID" value="NC_007798.1"/>
</dbReference>
<dbReference type="SMR" id="Q2GF15"/>
<dbReference type="STRING" id="222891.NSE_0039"/>
<dbReference type="KEGG" id="nse:NSE_0039"/>
<dbReference type="eggNOG" id="COG1758">
    <property type="taxonomic scope" value="Bacteria"/>
</dbReference>
<dbReference type="HOGENOM" id="CLU_160656_0_0_5"/>
<dbReference type="OrthoDB" id="9796300at2"/>
<dbReference type="Proteomes" id="UP000001942">
    <property type="component" value="Chromosome"/>
</dbReference>
<dbReference type="GO" id="GO:0000428">
    <property type="term" value="C:DNA-directed RNA polymerase complex"/>
    <property type="evidence" value="ECO:0007669"/>
    <property type="project" value="UniProtKB-KW"/>
</dbReference>
<dbReference type="GO" id="GO:0003677">
    <property type="term" value="F:DNA binding"/>
    <property type="evidence" value="ECO:0007669"/>
    <property type="project" value="UniProtKB-UniRule"/>
</dbReference>
<dbReference type="GO" id="GO:0003899">
    <property type="term" value="F:DNA-directed RNA polymerase activity"/>
    <property type="evidence" value="ECO:0007669"/>
    <property type="project" value="UniProtKB-UniRule"/>
</dbReference>
<dbReference type="GO" id="GO:0006351">
    <property type="term" value="P:DNA-templated transcription"/>
    <property type="evidence" value="ECO:0007669"/>
    <property type="project" value="UniProtKB-UniRule"/>
</dbReference>
<dbReference type="Gene3D" id="3.90.940.10">
    <property type="match status" value="1"/>
</dbReference>
<dbReference type="HAMAP" id="MF_00366">
    <property type="entry name" value="RNApol_bact_RpoZ"/>
    <property type="match status" value="1"/>
</dbReference>
<dbReference type="InterPro" id="IPR003716">
    <property type="entry name" value="DNA-dir_RNA_pol_omega"/>
</dbReference>
<dbReference type="InterPro" id="IPR006110">
    <property type="entry name" value="Pol_omega/Rpo6/RPB6"/>
</dbReference>
<dbReference type="InterPro" id="IPR036161">
    <property type="entry name" value="RPB6/omega-like_sf"/>
</dbReference>
<dbReference type="NCBIfam" id="TIGR00690">
    <property type="entry name" value="rpoZ"/>
    <property type="match status" value="1"/>
</dbReference>
<dbReference type="Pfam" id="PF01192">
    <property type="entry name" value="RNA_pol_Rpb6"/>
    <property type="match status" value="1"/>
</dbReference>
<dbReference type="SUPFAM" id="SSF63562">
    <property type="entry name" value="RPB6/omega subunit-like"/>
    <property type="match status" value="1"/>
</dbReference>
<protein>
    <recommendedName>
        <fullName evidence="1">DNA-directed RNA polymerase subunit omega</fullName>
        <shortName evidence="1">RNAP omega subunit</shortName>
        <ecNumber evidence="1">2.7.7.6</ecNumber>
    </recommendedName>
    <alternativeName>
        <fullName evidence="1">RNA polymerase omega subunit</fullName>
    </alternativeName>
    <alternativeName>
        <fullName evidence="1">Transcriptase subunit omega</fullName>
    </alternativeName>
</protein>
<keyword id="KW-0240">DNA-directed RNA polymerase</keyword>
<keyword id="KW-0548">Nucleotidyltransferase</keyword>
<keyword id="KW-0804">Transcription</keyword>
<keyword id="KW-0808">Transferase</keyword>
<name>RPOZ_NEOSM</name>
<evidence type="ECO:0000255" key="1">
    <source>
        <dbReference type="HAMAP-Rule" id="MF_00366"/>
    </source>
</evidence>
<reference key="1">
    <citation type="journal article" date="2006" name="PLoS Genet.">
        <title>Comparative genomics of emerging human ehrlichiosis agents.</title>
        <authorList>
            <person name="Dunning Hotopp J.C."/>
            <person name="Lin M."/>
            <person name="Madupu R."/>
            <person name="Crabtree J."/>
            <person name="Angiuoli S.V."/>
            <person name="Eisen J.A."/>
            <person name="Seshadri R."/>
            <person name="Ren Q."/>
            <person name="Wu M."/>
            <person name="Utterback T.R."/>
            <person name="Smith S."/>
            <person name="Lewis M."/>
            <person name="Khouri H."/>
            <person name="Zhang C."/>
            <person name="Niu H."/>
            <person name="Lin Q."/>
            <person name="Ohashi N."/>
            <person name="Zhi N."/>
            <person name="Nelson W.C."/>
            <person name="Brinkac L.M."/>
            <person name="Dodson R.J."/>
            <person name="Rosovitz M.J."/>
            <person name="Sundaram J.P."/>
            <person name="Daugherty S.C."/>
            <person name="Davidsen T."/>
            <person name="Durkin A.S."/>
            <person name="Gwinn M.L."/>
            <person name="Haft D.H."/>
            <person name="Selengut J.D."/>
            <person name="Sullivan S.A."/>
            <person name="Zafar N."/>
            <person name="Zhou L."/>
            <person name="Benahmed F."/>
            <person name="Forberger H."/>
            <person name="Halpin R."/>
            <person name="Mulligan S."/>
            <person name="Robinson J."/>
            <person name="White O."/>
            <person name="Rikihisa Y."/>
            <person name="Tettelin H."/>
        </authorList>
    </citation>
    <scope>NUCLEOTIDE SEQUENCE [LARGE SCALE GENOMIC DNA]</scope>
    <source>
        <strain>ATCC VR-367 / Miyayama</strain>
    </source>
</reference>
<accession>Q2GF15</accession>
<feature type="chain" id="PRO_1000121249" description="DNA-directed RNA polymerase subunit omega">
    <location>
        <begin position="1"/>
        <end position="128"/>
    </location>
</feature>
<proteinExistence type="inferred from homology"/>